<proteinExistence type="inferred from homology"/>
<sequence length="325" mass="35132">MLRLIALLVCVVYVYGDDVPYSSNQGKCGGHDYEKDGLCCASCHPGFYASRLCGPGSNTVCSPCEDGTFTASTNHAPACVSCRGPCTGHLSESQPCDRTHDRVCNCSTGNYCLLKGQNGCRICAPQTKCPAGYGVSGHTRAGDTLCEKCPPHTYSDSLSPTERCGTSFNYISVGFNLYPVNETSCTTTAGHNEVIKTKEFTVTLNYTDCDPVFHTEYYATSGKEGAGGFFTGTDIYQNTTKVCTLNVEIQCSEGDDIHTLQKTNGGSTMPHSETITVVGSCLSDVNVDIMYSDTNHPGEVDDFVEYHWGTRLRFFPLPKRCTPVS</sequence>
<name>VT2_RFVKA</name>
<organismHost>
    <name type="scientific">Oryctolagus cuniculus</name>
    <name type="common">Rabbit</name>
    <dbReference type="NCBI Taxonomy" id="9986"/>
</organismHost>
<evidence type="ECO:0000255" key="1"/>
<evidence type="ECO:0000255" key="2">
    <source>
        <dbReference type="PROSITE-ProRule" id="PRU00206"/>
    </source>
</evidence>
<evidence type="ECO:0000269" key="3">
    <source>
    </source>
</evidence>
<protein>
    <recommendedName>
        <fullName>Tumor necrosis factor soluble receptor</fullName>
    </recommendedName>
    <alternativeName>
        <fullName>Protein T2</fullName>
    </alternativeName>
</protein>
<gene>
    <name type="ORF">s002L</name>
    <name type="ORF">s002R</name>
    <name type="ORF">T2</name>
</gene>
<keyword id="KW-1015">Disulfide bond</keyword>
<keyword id="KW-0325">Glycoprotein</keyword>
<keyword id="KW-0675">Receptor</keyword>
<keyword id="KW-1185">Reference proteome</keyword>
<keyword id="KW-0677">Repeat</keyword>
<keyword id="KW-0732">Signal</keyword>
<reference key="1">
    <citation type="journal article" date="1987" name="Virology">
        <title>Tumorigenic poxviruses: genomic organization and DNA sequence of the telomeric region of the Shope fibroma virus genome.</title>
        <authorList>
            <person name="Upton C."/>
            <person name="Delange A.M."/>
            <person name="McFadden G."/>
        </authorList>
    </citation>
    <scope>NUCLEOTIDE SEQUENCE [GENOMIC DNA]</scope>
</reference>
<reference key="2">
    <citation type="journal article" date="1991" name="Biochem. Biophys. Res. Commun.">
        <title>T2 open reading frame from the Shope fibroma virus encodes a soluble form of the TNF receptor.</title>
        <authorList>
            <person name="Smith C.A."/>
            <person name="Davis T."/>
            <person name="Wignall J.M."/>
            <person name="Din W.S."/>
            <person name="Farrah T."/>
            <person name="Upton C."/>
            <person name="McFadden G."/>
            <person name="Goodwin R.G."/>
        </authorList>
    </citation>
    <scope>NUCLEOTIDE SEQUENCE [GENOMIC DNA]</scope>
    <scope>FUNCTION</scope>
</reference>
<reference key="3">
    <citation type="journal article" date="1991" name="Virology">
        <title>Sequence and analysis of a portion of the genomes of Shope fibroma virus and malignant rabbit fibroma virus that is important for viral replication in lymphocytes.</title>
        <authorList>
            <person name="Strayer D.S."/>
            <person name="Jerng H.H."/>
            <person name="O'Connor K."/>
        </authorList>
    </citation>
    <scope>NUCLEOTIDE SEQUENCE [GENOMIC DNA]</scope>
</reference>
<reference key="4">
    <citation type="journal article" date="1999" name="Virology">
        <title>The complete genome sequence of shope (Rabbit) fibroma virus.</title>
        <authorList>
            <person name="Willer D.O."/>
            <person name="McFadden G."/>
            <person name="Evans D.H."/>
        </authorList>
    </citation>
    <scope>NUCLEOTIDE SEQUENCE [LARGE SCALE GENOMIC DNA]</scope>
</reference>
<dbReference type="EMBL" id="M17433">
    <property type="status" value="NOT_ANNOTATED_CDS"/>
    <property type="molecule type" value="Genomic_DNA"/>
</dbReference>
<dbReference type="EMBL" id="AF170722">
    <property type="protein sequence ID" value="AAF17884.1"/>
    <property type="molecule type" value="Genomic_DNA"/>
</dbReference>
<dbReference type="EMBL" id="AF170722">
    <property type="protein sequence ID" value="AAF18043.1"/>
    <property type="molecule type" value="Genomic_DNA"/>
</dbReference>
<dbReference type="PIR" id="B43692">
    <property type="entry name" value="B43692"/>
</dbReference>
<dbReference type="RefSeq" id="NP_051887.1">
    <property type="nucleotide sequence ID" value="NC_001266.1"/>
</dbReference>
<dbReference type="RefSeq" id="NP_052049.1">
    <property type="nucleotide sequence ID" value="NC_001266.1"/>
</dbReference>
<dbReference type="SMR" id="P25943"/>
<dbReference type="KEGG" id="vg:1486845"/>
<dbReference type="KEGG" id="vg:1487004"/>
<dbReference type="Proteomes" id="UP000000868">
    <property type="component" value="Segment"/>
</dbReference>
<dbReference type="GO" id="GO:0043120">
    <property type="term" value="F:tumor necrosis factor binding"/>
    <property type="evidence" value="ECO:0007669"/>
    <property type="project" value="TreeGrafter"/>
</dbReference>
<dbReference type="GO" id="GO:0005031">
    <property type="term" value="F:tumor necrosis factor receptor activity"/>
    <property type="evidence" value="ECO:0007669"/>
    <property type="project" value="InterPro"/>
</dbReference>
<dbReference type="GO" id="GO:0051044">
    <property type="term" value="P:positive regulation of membrane protein ectodomain proteolysis"/>
    <property type="evidence" value="ECO:0007669"/>
    <property type="project" value="TreeGrafter"/>
</dbReference>
<dbReference type="GO" id="GO:0042129">
    <property type="term" value="P:regulation of T cell proliferation"/>
    <property type="evidence" value="ECO:0007669"/>
    <property type="project" value="TreeGrafter"/>
</dbReference>
<dbReference type="GO" id="GO:0052031">
    <property type="term" value="P:symbiont-mediated perturbation of host defense response"/>
    <property type="evidence" value="ECO:0007669"/>
    <property type="project" value="InterPro"/>
</dbReference>
<dbReference type="CDD" id="cd15839">
    <property type="entry name" value="TNFRSF_viral"/>
    <property type="match status" value="1"/>
</dbReference>
<dbReference type="Gene3D" id="2.60.240.20">
    <property type="match status" value="1"/>
</dbReference>
<dbReference type="Gene3D" id="2.10.50.10">
    <property type="entry name" value="Tumor Necrosis Factor Receptor, subunit A, domain 2"/>
    <property type="match status" value="2"/>
</dbReference>
<dbReference type="InterPro" id="IPR010806">
    <property type="entry name" value="Poxvirus_TNF-rcpt-II_C"/>
</dbReference>
<dbReference type="InterPro" id="IPR011172">
    <property type="entry name" value="Poxvirus_TNF_rcpt-II"/>
</dbReference>
<dbReference type="InterPro" id="IPR051670">
    <property type="entry name" value="TNF_chemokine_rcpt-like"/>
</dbReference>
<dbReference type="InterPro" id="IPR001368">
    <property type="entry name" value="TNFR/NGFR_Cys_rich_reg"/>
</dbReference>
<dbReference type="InterPro" id="IPR034059">
    <property type="entry name" value="TNFRSF_N_viral"/>
</dbReference>
<dbReference type="PANTHER" id="PTHR47386">
    <property type="entry name" value="TUMOR NECROSIS FACTOR RECEPTOR SUPERFAMILY MEMBER 1B"/>
    <property type="match status" value="1"/>
</dbReference>
<dbReference type="PANTHER" id="PTHR47386:SF1">
    <property type="entry name" value="TUMOR NECROSIS FACTOR RECEPTOR SUPERFAMILY MEMBER 1B"/>
    <property type="match status" value="1"/>
</dbReference>
<dbReference type="Pfam" id="PF07190">
    <property type="entry name" value="CrmD_SECRET"/>
    <property type="match status" value="1"/>
</dbReference>
<dbReference type="Pfam" id="PF00020">
    <property type="entry name" value="TNFR_c6"/>
    <property type="match status" value="1"/>
</dbReference>
<dbReference type="PIRSF" id="PIRSF001790">
    <property type="entry name" value="TNF_C22L"/>
    <property type="match status" value="1"/>
</dbReference>
<dbReference type="SMART" id="SM00208">
    <property type="entry name" value="TNFR"/>
    <property type="match status" value="3"/>
</dbReference>
<dbReference type="SUPFAM" id="SSF57586">
    <property type="entry name" value="TNF receptor-like"/>
    <property type="match status" value="2"/>
</dbReference>
<dbReference type="PROSITE" id="PS00652">
    <property type="entry name" value="TNFR_NGFR_1"/>
    <property type="match status" value="2"/>
</dbReference>
<dbReference type="PROSITE" id="PS50050">
    <property type="entry name" value="TNFR_NGFR_2"/>
    <property type="match status" value="1"/>
</dbReference>
<feature type="signal peptide" evidence="1">
    <location>
        <begin position="1"/>
        <end position="16"/>
    </location>
</feature>
<feature type="chain" id="PRO_0000034614" description="Tumor necrosis factor soluble receptor">
    <location>
        <begin position="17"/>
        <end position="325"/>
    </location>
</feature>
<feature type="repeat" description="TNFR-Cys 1">
    <location>
        <begin position="27"/>
        <end position="62"/>
    </location>
</feature>
<feature type="repeat" description="TNFR-Cys 2">
    <location>
        <begin position="63"/>
        <end position="104"/>
    </location>
</feature>
<feature type="repeat" description="TNFR-Cys 3">
    <location>
        <begin position="105"/>
        <end position="147"/>
    </location>
</feature>
<feature type="repeat" description="TNFR-Cys 4">
    <location>
        <begin position="148"/>
        <end position="186"/>
    </location>
</feature>
<feature type="glycosylation site" description="N-linked (GlcNAc...) asparagine; by host" evidence="1">
    <location>
        <position position="105"/>
    </location>
</feature>
<feature type="glycosylation site" description="N-linked (GlcNAc...) asparagine; by host" evidence="1">
    <location>
        <position position="181"/>
    </location>
</feature>
<feature type="glycosylation site" description="N-linked (GlcNAc...) asparagine; by host" evidence="1">
    <location>
        <position position="205"/>
    </location>
</feature>
<feature type="glycosylation site" description="N-linked (GlcNAc...) asparagine; by host" evidence="1">
    <location>
        <position position="238"/>
    </location>
</feature>
<feature type="disulfide bond" evidence="2">
    <location>
        <begin position="28"/>
        <end position="39"/>
    </location>
</feature>
<feature type="disulfide bond" evidence="2">
    <location>
        <begin position="40"/>
        <end position="53"/>
    </location>
</feature>
<feature type="disulfide bond" evidence="2">
    <location>
        <begin position="43"/>
        <end position="61"/>
    </location>
</feature>
<feature type="disulfide bond" evidence="2">
    <location>
        <begin position="64"/>
        <end position="79"/>
    </location>
</feature>
<feature type="disulfide bond" evidence="2">
    <location>
        <begin position="82"/>
        <end position="96"/>
    </location>
</feature>
<feature type="disulfide bond" evidence="2">
    <location>
        <begin position="86"/>
        <end position="104"/>
    </location>
</feature>
<feature type="disulfide bond" evidence="2">
    <location>
        <begin position="106"/>
        <end position="120"/>
    </location>
</feature>
<feature type="disulfide bond" evidence="2">
    <location>
        <begin position="123"/>
        <end position="146"/>
    </location>
</feature>
<feature type="disulfide bond" evidence="2">
    <location>
        <begin position="129"/>
        <end position="149"/>
    </location>
</feature>
<feature type="disulfide bond" evidence="2">
    <location>
        <begin position="164"/>
        <end position="185"/>
    </location>
</feature>
<accession>P25943</accession>
<accession>Q77PB3</accession>
<comment type="function">
    <text evidence="3">Binds to TNF-alpha and beta. Probably prevents TNF to reach cellular target and thereby deampening the potential antiviral effects of the cytokine.</text>
</comment>
<organism>
    <name type="scientific">Rabbit fibroma virus (strain Kasza)</name>
    <name type="common">RFV</name>
    <name type="synonym">Shope fibroma virus (strain Kasza)</name>
    <dbReference type="NCBI Taxonomy" id="10272"/>
    <lineage>
        <taxon>Viruses</taxon>
        <taxon>Varidnaviria</taxon>
        <taxon>Bamfordvirae</taxon>
        <taxon>Nucleocytoviricota</taxon>
        <taxon>Pokkesviricetes</taxon>
        <taxon>Chitovirales</taxon>
        <taxon>Poxviridae</taxon>
        <taxon>Chordopoxvirinae</taxon>
        <taxon>Leporipoxvirus</taxon>
        <taxon>Rabbit fibroma virus</taxon>
    </lineage>
</organism>